<proteinExistence type="evidence at protein level"/>
<feature type="signal peptide" evidence="1">
    <location>
        <begin position="1"/>
        <end position="19"/>
    </location>
</feature>
<feature type="propeptide" id="PRO_0000035486" evidence="4">
    <location>
        <begin position="20"/>
        <end position="36"/>
    </location>
</feature>
<feature type="chain" id="PRO_0000035487" description="Omega-agatoxin-1A major chain" evidence="4">
    <location>
        <begin position="37"/>
        <end position="102"/>
    </location>
</feature>
<feature type="propeptide" id="PRO_0000035488" description="Glu-rich">
    <location>
        <begin position="103"/>
        <end position="109"/>
    </location>
</feature>
<feature type="chain" id="PRO_0000035489" description="Omega-agatoxin-1A minor chain">
    <location>
        <begin position="110"/>
        <end position="112"/>
    </location>
</feature>
<feature type="sequence conflict" description="In Ref. 2; AA sequence." evidence="5" ref="2">
    <original>D</original>
    <variation>N</variation>
    <location>
        <position position="101"/>
    </location>
</feature>
<comment type="function">
    <text evidence="3">Omega-agatoxins are antagonists of voltage-gated calcium channels. They block insect neuromuscular transmission presynaptically. This toxin is a blocker of L-type calcium channels (Cav/CACNA1).</text>
</comment>
<comment type="subunit">
    <text>Heterodimer of two subunits, a major chain and a minor chain, linked by a disulfide bond.</text>
</comment>
<comment type="subcellular location">
    <subcellularLocation>
        <location evidence="2 4">Secreted</location>
    </subcellularLocation>
</comment>
<comment type="tissue specificity">
    <text evidence="6 7">Expressed by the venom gland.</text>
</comment>
<comment type="PTM">
    <text>Proteolytically processed to yield the major and the minor chains.</text>
</comment>
<comment type="mass spectrometry">
    <text>The measured ranges are 37-102, 110-112.</text>
</comment>
<comment type="similarity">
    <text evidence="5">Belongs to the neurotoxin 04 (omega-agtx) family. 01 (type I omega-agtx) subfamily.</text>
</comment>
<keyword id="KW-0108">Calcium channel impairing toxin</keyword>
<keyword id="KW-0903">Direct protein sequencing</keyword>
<keyword id="KW-1015">Disulfide bond</keyword>
<keyword id="KW-0872">Ion channel impairing toxin</keyword>
<keyword id="KW-0528">Neurotoxin</keyword>
<keyword id="KW-0638">Presynaptic neurotoxin</keyword>
<keyword id="KW-0964">Secreted</keyword>
<keyword id="KW-0732">Signal</keyword>
<keyword id="KW-0800">Toxin</keyword>
<keyword id="KW-1218">Voltage-gated calcium channel impairing toxin</keyword>
<protein>
    <recommendedName>
        <fullName>Omega-agatoxin-1A</fullName>
    </recommendedName>
    <alternativeName>
        <fullName>Omega-agatoxin IA</fullName>
        <shortName>Omega-Aga-IA</shortName>
    </alternativeName>
    <component>
        <recommendedName>
            <fullName>Omega-agatoxin-1A major chain</fullName>
        </recommendedName>
    </component>
    <component>
        <recommendedName>
            <fullName>Omega-agatoxin-1A minor chain</fullName>
        </recommendedName>
    </component>
</protein>
<sequence>MMKFVVFLACLFVAAHSFAVEGEEEYFEAEVPELERAKALPPGSVCDGNESDCKCYGKWHKCRCPWKWHFTGEGPCTCEKGMKHTCITKLHCPNKAEWGLDWRSEESERSPC</sequence>
<name>TOG1A_AGEAP</name>
<dbReference type="EMBL" id="M95540">
    <property type="status" value="NOT_ANNOTATED_CDS"/>
    <property type="molecule type" value="mRNA"/>
</dbReference>
<dbReference type="PIR" id="A45069">
    <property type="entry name" value="A45069"/>
</dbReference>
<dbReference type="SMR" id="P15969"/>
<dbReference type="ArachnoServer" id="AS000175">
    <property type="toxin name" value="omega-agatoxin-Aa1a"/>
</dbReference>
<dbReference type="GO" id="GO:0005576">
    <property type="term" value="C:extracellular region"/>
    <property type="evidence" value="ECO:0007669"/>
    <property type="project" value="UniProtKB-SubCell"/>
</dbReference>
<dbReference type="GO" id="GO:0044231">
    <property type="term" value="C:host cell presynaptic membrane"/>
    <property type="evidence" value="ECO:0007669"/>
    <property type="project" value="UniProtKB-KW"/>
</dbReference>
<dbReference type="GO" id="GO:0005246">
    <property type="term" value="F:calcium channel regulator activity"/>
    <property type="evidence" value="ECO:0007669"/>
    <property type="project" value="UniProtKB-KW"/>
</dbReference>
<dbReference type="GO" id="GO:0090729">
    <property type="term" value="F:toxin activity"/>
    <property type="evidence" value="ECO:0007669"/>
    <property type="project" value="UniProtKB-KW"/>
</dbReference>
<dbReference type="InterPro" id="IPR013605">
    <property type="entry name" value="Toxin_34"/>
</dbReference>
<dbReference type="Pfam" id="PF08396">
    <property type="entry name" value="Toxin_34"/>
    <property type="match status" value="1"/>
</dbReference>
<organism>
    <name type="scientific">Agelenopsis aperta</name>
    <name type="common">North American funnel-web spider</name>
    <name type="synonym">Agelenopsis gertschi</name>
    <dbReference type="NCBI Taxonomy" id="6908"/>
    <lineage>
        <taxon>Eukaryota</taxon>
        <taxon>Metazoa</taxon>
        <taxon>Ecdysozoa</taxon>
        <taxon>Arthropoda</taxon>
        <taxon>Chelicerata</taxon>
        <taxon>Arachnida</taxon>
        <taxon>Araneae</taxon>
        <taxon>Araneomorphae</taxon>
        <taxon>Entelegynae</taxon>
        <taxon>Agelenidae</taxon>
        <taxon>Agelenopsis</taxon>
    </lineage>
</organism>
<accession>P15969</accession>
<reference key="1">
    <citation type="journal article" date="1992" name="J. Biol. Chem.">
        <title>Heterodimeric structure of the spider toxin omega-agatoxin IA revealed by precursor analysis and mass spectrometry.</title>
        <authorList>
            <person name="Santos A.D."/>
            <person name="Imperial J.S."/>
            <person name="Chaudhary T."/>
            <person name="Beavis R.C."/>
            <person name="Chait B.T."/>
            <person name="Hunsperger J.P."/>
            <person name="Olivera B.M."/>
            <person name="Adams M.E."/>
            <person name="Hillyard D.R."/>
        </authorList>
    </citation>
    <scope>NUCLEOTIDE SEQUENCE [MRNA]</scope>
    <scope>PARTIAL PROTEIN SEQUENCE</scope>
    <scope>SUBCELLULAR LOCATION</scope>
    <scope>MASS SPECTROMETRY</scope>
    <source>
        <tissue>Venom</tissue>
    </source>
</reference>
<reference key="2">
    <citation type="journal article" date="1990" name="J. Biol. Chem.">
        <title>Omega-agatoxins: novel calcium channel antagonists of two subtypes from funnel web spider (Agelenopsis aperta) venom.</title>
        <authorList>
            <person name="Adams M.E."/>
            <person name="Bindokas V.P."/>
            <person name="Hasegawa L."/>
            <person name="Venema V.J."/>
        </authorList>
    </citation>
    <scope>PROTEIN SEQUENCE OF 37-102</scope>
    <scope>SUBCELLULAR LOCATION</scope>
    <scope>IDENTIFICATION BY MASS SPECTROMETRY</scope>
    <source>
        <tissue>Venom</tissue>
    </source>
</reference>
<reference key="3">
    <citation type="journal article" date="1991" name="J. Neurophysiol.">
        <title>Differential antagonism of transmitter release by subtypes of omega-agatoxins.</title>
        <authorList>
            <person name="Bindokas V.P."/>
            <person name="Venema V.J."/>
            <person name="Adams M.E."/>
        </authorList>
    </citation>
    <scope>FUNCTION</scope>
</reference>
<evidence type="ECO:0000255" key="1"/>
<evidence type="ECO:0000269" key="2">
    <source>
    </source>
</evidence>
<evidence type="ECO:0000269" key="3">
    <source>
    </source>
</evidence>
<evidence type="ECO:0000269" key="4">
    <source>
    </source>
</evidence>
<evidence type="ECO:0000305" key="5"/>
<evidence type="ECO:0000305" key="6">
    <source>
    </source>
</evidence>
<evidence type="ECO:0000305" key="7">
    <source>
    </source>
</evidence>